<name>ALDR_RABIT</name>
<organism>
    <name type="scientific">Oryctolagus cuniculus</name>
    <name type="common">Rabbit</name>
    <dbReference type="NCBI Taxonomy" id="9986"/>
    <lineage>
        <taxon>Eukaryota</taxon>
        <taxon>Metazoa</taxon>
        <taxon>Chordata</taxon>
        <taxon>Craniata</taxon>
        <taxon>Vertebrata</taxon>
        <taxon>Euteleostomi</taxon>
        <taxon>Mammalia</taxon>
        <taxon>Eutheria</taxon>
        <taxon>Euarchontoglires</taxon>
        <taxon>Glires</taxon>
        <taxon>Lagomorpha</taxon>
        <taxon>Leporidae</taxon>
        <taxon>Oryctolagus</taxon>
    </lineage>
</organism>
<comment type="function">
    <text>Catalyzes the NADPH-dependent reduction of a wide variety of carbonyl-containing compounds to their corresponding alcohols with a broad range of catalytic efficiencies.</text>
</comment>
<comment type="function">
    <text evidence="2">Catalyzes the NADPH-dependent reduction of a wide variety of carbonyl-containing compounds to their corresponding alcohols. Displays enzymatic activity towards endogenous metabolites such as aromatic and aliphatic aldehydes, ketones, monosacharides, bile acids and xenobiotics substrates. Key enzyme in the polyol pathway, catalyzes reduction of glucose to sorbitol during hyperglycemia. Reduces steroids and their derivatives and prostaglandins. Displays low enzymatic activity toward all-trans-retinal, 9-cis-retinal, and 13-cis-retinal. Catalyzes the reduction of diverse phospholipid aldehydes such as 1-palmitoyl-2-(5-oxovaleroyl)-sn -glycero-3-phosphoethanolamin (POVPC) and related phospholipid aldehydes that are generated from the oxydation of phosphotidylcholine and phosphatdyleethanolamides. Plays a role in detoxifying dietary and lipid-derived unsaturated carbonyls, such as crotonaldehyde, 4-hydroxynonenal, trans-2-hexenal, trans-2,4-hexadienal and their glutathione-conjugates carbonyls (GS-carbonyls).</text>
</comment>
<comment type="catalytic activity">
    <reaction evidence="2">
        <text>an alditol + NADP(+) = an aldose + NADPH + H(+)</text>
        <dbReference type="Rhea" id="RHEA:12789"/>
        <dbReference type="Rhea" id="RHEA-COMP:9554"/>
        <dbReference type="Rhea" id="RHEA-COMP:9555"/>
        <dbReference type="ChEBI" id="CHEBI:15378"/>
        <dbReference type="ChEBI" id="CHEBI:15693"/>
        <dbReference type="ChEBI" id="CHEBI:17522"/>
        <dbReference type="ChEBI" id="CHEBI:57783"/>
        <dbReference type="ChEBI" id="CHEBI:58349"/>
        <dbReference type="EC" id="1.1.1.21"/>
    </reaction>
</comment>
<comment type="catalytic activity">
    <reaction evidence="2">
        <text>all-trans-retinol + NADP(+) = all-trans-retinal + NADPH + H(+)</text>
        <dbReference type="Rhea" id="RHEA:25033"/>
        <dbReference type="ChEBI" id="CHEBI:15378"/>
        <dbReference type="ChEBI" id="CHEBI:17336"/>
        <dbReference type="ChEBI" id="CHEBI:17898"/>
        <dbReference type="ChEBI" id="CHEBI:57783"/>
        <dbReference type="ChEBI" id="CHEBI:58349"/>
        <dbReference type="EC" id="1.1.1.300"/>
    </reaction>
</comment>
<comment type="catalytic activity">
    <reaction evidence="2">
        <text>9-cis-retinol + NADP(+) = 9-cis-retinal + NADPH + H(+)</text>
        <dbReference type="Rhea" id="RHEA:54916"/>
        <dbReference type="ChEBI" id="CHEBI:15378"/>
        <dbReference type="ChEBI" id="CHEBI:57783"/>
        <dbReference type="ChEBI" id="CHEBI:58349"/>
        <dbReference type="ChEBI" id="CHEBI:78272"/>
        <dbReference type="ChEBI" id="CHEBI:78273"/>
    </reaction>
</comment>
<comment type="catalytic activity">
    <reaction evidence="2">
        <text>13-cis-retinol + NADP(+) = 13-cis-retinal + NADPH + H(+)</text>
        <dbReference type="Rhea" id="RHEA:54920"/>
        <dbReference type="ChEBI" id="CHEBI:15378"/>
        <dbReference type="ChEBI" id="CHEBI:45479"/>
        <dbReference type="ChEBI" id="CHEBI:45487"/>
        <dbReference type="ChEBI" id="CHEBI:57783"/>
        <dbReference type="ChEBI" id="CHEBI:58349"/>
    </reaction>
</comment>
<comment type="catalytic activity">
    <reaction evidence="2">
        <text>glycerol + NADP(+) = D-glyceraldehyde + NADPH + H(+)</text>
        <dbReference type="Rhea" id="RHEA:23592"/>
        <dbReference type="ChEBI" id="CHEBI:15378"/>
        <dbReference type="ChEBI" id="CHEBI:17378"/>
        <dbReference type="ChEBI" id="CHEBI:17754"/>
        <dbReference type="ChEBI" id="CHEBI:57783"/>
        <dbReference type="ChEBI" id="CHEBI:58349"/>
        <dbReference type="EC" id="1.1.1.372"/>
    </reaction>
</comment>
<comment type="catalytic activity">
    <reaction evidence="2">
        <text>glycerol + NADP(+) = L-glyceraldehyde + NADPH + H(+)</text>
        <dbReference type="Rhea" id="RHEA:38111"/>
        <dbReference type="ChEBI" id="CHEBI:15378"/>
        <dbReference type="ChEBI" id="CHEBI:17754"/>
        <dbReference type="ChEBI" id="CHEBI:27975"/>
        <dbReference type="ChEBI" id="CHEBI:57783"/>
        <dbReference type="ChEBI" id="CHEBI:58349"/>
        <dbReference type="EC" id="1.1.1.372"/>
    </reaction>
</comment>
<comment type="catalytic activity">
    <reaction evidence="2">
        <text>prenol + NADP(+) = 3-methyl-2-butenal + NADPH + H(+)</text>
        <dbReference type="Rhea" id="RHEA:58420"/>
        <dbReference type="ChEBI" id="CHEBI:15378"/>
        <dbReference type="ChEBI" id="CHEBI:15825"/>
        <dbReference type="ChEBI" id="CHEBI:16019"/>
        <dbReference type="ChEBI" id="CHEBI:57783"/>
        <dbReference type="ChEBI" id="CHEBI:58349"/>
    </reaction>
</comment>
<comment type="catalytic activity">
    <reaction evidence="2">
        <text>(E)-hex-2-en-1-ol + NADP(+) = (E)-hex-2-enal + NADPH + H(+)</text>
        <dbReference type="Rhea" id="RHEA:58424"/>
        <dbReference type="ChEBI" id="CHEBI:15378"/>
        <dbReference type="ChEBI" id="CHEBI:28913"/>
        <dbReference type="ChEBI" id="CHEBI:57783"/>
        <dbReference type="ChEBI" id="CHEBI:58349"/>
        <dbReference type="ChEBI" id="CHEBI:141205"/>
    </reaction>
</comment>
<comment type="catalytic activity">
    <reaction evidence="2">
        <text>(E,E)-2,4-hexadien-1-ol + NADP(+) = (E,E)-2,4-hexadienal + NADPH + H(+)</text>
        <dbReference type="Rhea" id="RHEA:58428"/>
        <dbReference type="ChEBI" id="CHEBI:15378"/>
        <dbReference type="ChEBI" id="CHEBI:57783"/>
        <dbReference type="ChEBI" id="CHEBI:58349"/>
        <dbReference type="ChEBI" id="CHEBI:82334"/>
        <dbReference type="ChEBI" id="CHEBI:142625"/>
    </reaction>
</comment>
<comment type="catalytic activity">
    <reaction evidence="2">
        <text>a 4-hydroxynonen-1-ol + NADP(+) = a 4-hydroxynonenal + NADPH + H(+)</text>
        <dbReference type="Rhea" id="RHEA:58336"/>
        <dbReference type="ChEBI" id="CHEBI:15378"/>
        <dbReference type="ChEBI" id="CHEBI:57783"/>
        <dbReference type="ChEBI" id="CHEBI:58349"/>
        <dbReference type="ChEBI" id="CHEBI:142593"/>
        <dbReference type="ChEBI" id="CHEBI:142606"/>
    </reaction>
</comment>
<comment type="catalytic activity">
    <reaction evidence="2">
        <text>prostaglandin F2alpha + NADP(+) = prostaglandin H2 + NADPH + H(+)</text>
        <dbReference type="Rhea" id="RHEA:45312"/>
        <dbReference type="ChEBI" id="CHEBI:15378"/>
        <dbReference type="ChEBI" id="CHEBI:57404"/>
        <dbReference type="ChEBI" id="CHEBI:57405"/>
        <dbReference type="ChEBI" id="CHEBI:57783"/>
        <dbReference type="ChEBI" id="CHEBI:58349"/>
    </reaction>
</comment>
<comment type="catalytic activity">
    <reaction evidence="2">
        <text>allyl alcohol + NADP(+) = acrolein + NADPH + H(+)</text>
        <dbReference type="Rhea" id="RHEA:12168"/>
        <dbReference type="ChEBI" id="CHEBI:15368"/>
        <dbReference type="ChEBI" id="CHEBI:15378"/>
        <dbReference type="ChEBI" id="CHEBI:16605"/>
        <dbReference type="ChEBI" id="CHEBI:57783"/>
        <dbReference type="ChEBI" id="CHEBI:58349"/>
        <dbReference type="EC" id="1.1.1.54"/>
    </reaction>
</comment>
<comment type="catalytic activity">
    <reaction evidence="2">
        <text>pyridine 3-methanol + NADP(+) = pyridine-3-carbaldehyde + NADPH + H(+)</text>
        <dbReference type="Rhea" id="RHEA:58776"/>
        <dbReference type="ChEBI" id="CHEBI:15378"/>
        <dbReference type="ChEBI" id="CHEBI:28345"/>
        <dbReference type="ChEBI" id="CHEBI:45213"/>
        <dbReference type="ChEBI" id="CHEBI:57783"/>
        <dbReference type="ChEBI" id="CHEBI:58349"/>
    </reaction>
</comment>
<comment type="catalytic activity">
    <reaction evidence="2">
        <text>1-hexadecanoyl-2-(5-oxopentanoyl)-sn-glycero-3-phosphocholine + NADPH + H(+) = 1-hexadecanoyl-2-(5-hydroxypentanoyl)-sn-glycero-3-phosphocholine + NADP(+)</text>
        <dbReference type="Rhea" id="RHEA:58512"/>
        <dbReference type="ChEBI" id="CHEBI:15378"/>
        <dbReference type="ChEBI" id="CHEBI:57783"/>
        <dbReference type="ChEBI" id="CHEBI:58349"/>
        <dbReference type="ChEBI" id="CHEBI:77890"/>
        <dbReference type="ChEBI" id="CHEBI:142747"/>
    </reaction>
</comment>
<comment type="catalytic activity">
    <reaction evidence="2">
        <text>1-hexadecanoyl-2-(7-oxoheptanoyl)-sn-glycero-3-phosphocholine + NADPH + H(+) = 1-hexadecanoyl-2-(7-hydroxyheptanoyl)-sn-glycero-3-phosphocholine + NADP(+)</text>
        <dbReference type="Rhea" id="RHEA:58752"/>
        <dbReference type="ChEBI" id="CHEBI:15378"/>
        <dbReference type="ChEBI" id="CHEBI:57783"/>
        <dbReference type="ChEBI" id="CHEBI:58349"/>
        <dbReference type="ChEBI" id="CHEBI:134601"/>
        <dbReference type="ChEBI" id="CHEBI:142748"/>
    </reaction>
</comment>
<comment type="catalytic activity">
    <reaction evidence="2">
        <text>1-hexadecanoyl-2-(9-oxononanoyl)-sn-glycero-3-phosphocholine + NADPH + H(+) = 1-hexadecanoyl-2-(9-hydroxynonanoyl)-sn-glycero-3-phosphocholine + NADP(+)</text>
        <dbReference type="Rhea" id="RHEA:58592"/>
        <dbReference type="ChEBI" id="CHEBI:15378"/>
        <dbReference type="ChEBI" id="CHEBI:57783"/>
        <dbReference type="ChEBI" id="CHEBI:58349"/>
        <dbReference type="ChEBI" id="CHEBI:61042"/>
        <dbReference type="ChEBI" id="CHEBI:142749"/>
    </reaction>
</comment>
<comment type="catalytic activity">
    <reaction evidence="2">
        <text>1-hexadecanoyl-2-(5-oxopentanoyl)-sn-glycero-3-phosphoethanolamine + NADPH + H(+) = 1-hexadecanoyl-2-(5-hydroxypentanoyl)-sn-glycero-3-phosphoethanolamine + NADP(+)</text>
        <dbReference type="Rhea" id="RHEA:58756"/>
        <dbReference type="ChEBI" id="CHEBI:15378"/>
        <dbReference type="ChEBI" id="CHEBI:57783"/>
        <dbReference type="ChEBI" id="CHEBI:58349"/>
        <dbReference type="ChEBI" id="CHEBI:142750"/>
        <dbReference type="ChEBI" id="CHEBI:142751"/>
    </reaction>
</comment>
<comment type="subunit">
    <text evidence="2">Monomer.</text>
</comment>
<comment type="subcellular location">
    <subcellularLocation>
        <location>Cytoplasm</location>
    </subcellularLocation>
</comment>
<comment type="similarity">
    <text evidence="5">Belongs to the aldo/keto reductase family.</text>
</comment>
<proteinExistence type="evidence at transcript level"/>
<dbReference type="EC" id="1.1.1.21" evidence="2"/>
<dbReference type="EC" id="1.1.1.300" evidence="2"/>
<dbReference type="EC" id="1.1.1.372" evidence="2"/>
<dbReference type="EC" id="1.1.1.54" evidence="2"/>
<dbReference type="EMBL" id="U13694">
    <property type="protein sequence ID" value="AAB60687.1"/>
    <property type="molecule type" value="Genomic_DNA"/>
</dbReference>
<dbReference type="EMBL" id="U13689">
    <property type="protein sequence ID" value="AAB60687.1"/>
    <property type="status" value="JOINED"/>
    <property type="molecule type" value="Genomic_DNA"/>
</dbReference>
<dbReference type="EMBL" id="U13690">
    <property type="protein sequence ID" value="AAB60687.1"/>
    <property type="status" value="JOINED"/>
    <property type="molecule type" value="Genomic_DNA"/>
</dbReference>
<dbReference type="EMBL" id="U13691">
    <property type="protein sequence ID" value="AAB60687.1"/>
    <property type="status" value="JOINED"/>
    <property type="molecule type" value="Genomic_DNA"/>
</dbReference>
<dbReference type="EMBL" id="U13692">
    <property type="protein sequence ID" value="AAB60687.1"/>
    <property type="status" value="JOINED"/>
    <property type="molecule type" value="Genomic_DNA"/>
</dbReference>
<dbReference type="EMBL" id="U13693">
    <property type="protein sequence ID" value="AAB60687.1"/>
    <property type="status" value="JOINED"/>
    <property type="molecule type" value="Genomic_DNA"/>
</dbReference>
<dbReference type="EMBL" id="M32818">
    <property type="protein sequence ID" value="AAA31160.1"/>
    <property type="molecule type" value="mRNA"/>
</dbReference>
<dbReference type="EMBL" id="U12316">
    <property type="protein sequence ID" value="AAA50833.1"/>
    <property type="molecule type" value="mRNA"/>
</dbReference>
<dbReference type="EMBL" id="J05048">
    <property type="protein sequence ID" value="AAA31157.1"/>
    <property type="molecule type" value="mRNA"/>
</dbReference>
<dbReference type="PIR" id="A34406">
    <property type="entry name" value="A34406"/>
</dbReference>
<dbReference type="RefSeq" id="NP_001075756.1">
    <property type="nucleotide sequence ID" value="NM_001082287.1"/>
</dbReference>
<dbReference type="SMR" id="P15122"/>
<dbReference type="FunCoup" id="P15122">
    <property type="interactions" value="981"/>
</dbReference>
<dbReference type="STRING" id="9986.ENSOCUP00000028417"/>
<dbReference type="ChEMBL" id="CHEMBL3567"/>
<dbReference type="GeneID" id="100009122"/>
<dbReference type="KEGG" id="ocu:100009122"/>
<dbReference type="CTD" id="231"/>
<dbReference type="InParanoid" id="P15122"/>
<dbReference type="OrthoDB" id="416253at2759"/>
<dbReference type="SABIO-RK" id="P15122"/>
<dbReference type="Proteomes" id="UP000001811">
    <property type="component" value="Unplaced"/>
</dbReference>
<dbReference type="GO" id="GO:0005737">
    <property type="term" value="C:cytoplasm"/>
    <property type="evidence" value="ECO:0007669"/>
    <property type="project" value="UniProtKB-SubCell"/>
</dbReference>
<dbReference type="GO" id="GO:0004032">
    <property type="term" value="F:aldose reductase (NADPH) activity"/>
    <property type="evidence" value="ECO:0007669"/>
    <property type="project" value="RHEA"/>
</dbReference>
<dbReference type="GO" id="GO:0052650">
    <property type="term" value="F:all-trans-retinol dehydrogenase (NADP+) activity"/>
    <property type="evidence" value="ECO:0007669"/>
    <property type="project" value="UniProtKB-EC"/>
</dbReference>
<dbReference type="GO" id="GO:0047655">
    <property type="term" value="F:allyl-alcohol dehydrogenase activity"/>
    <property type="evidence" value="ECO:0007669"/>
    <property type="project" value="UniProtKB-EC"/>
</dbReference>
<dbReference type="GO" id="GO:0047956">
    <property type="term" value="F:glycerol dehydrogenase (NADP+) activity"/>
    <property type="evidence" value="ECO:0007669"/>
    <property type="project" value="RHEA"/>
</dbReference>
<dbReference type="GO" id="GO:0036130">
    <property type="term" value="F:prostaglandin H2 endoperoxidase reductase activity"/>
    <property type="evidence" value="ECO:0007669"/>
    <property type="project" value="RHEA"/>
</dbReference>
<dbReference type="GO" id="GO:0001758">
    <property type="term" value="F:retinal dehydrogenase activity"/>
    <property type="evidence" value="ECO:0000250"/>
    <property type="project" value="UniProtKB"/>
</dbReference>
<dbReference type="GO" id="GO:0001523">
    <property type="term" value="P:retinoid metabolic process"/>
    <property type="evidence" value="ECO:0000250"/>
    <property type="project" value="UniProtKB"/>
</dbReference>
<dbReference type="CDD" id="cd19107">
    <property type="entry name" value="AKR_AKR1B1-19"/>
    <property type="match status" value="1"/>
</dbReference>
<dbReference type="FunFam" id="3.20.20.100:FF:000009">
    <property type="entry name" value="Aldo-keto reductase family 1 member B1"/>
    <property type="match status" value="1"/>
</dbReference>
<dbReference type="Gene3D" id="3.20.20.100">
    <property type="entry name" value="NADP-dependent oxidoreductase domain"/>
    <property type="match status" value="1"/>
</dbReference>
<dbReference type="InterPro" id="IPR020471">
    <property type="entry name" value="AKR"/>
</dbReference>
<dbReference type="InterPro" id="IPR018170">
    <property type="entry name" value="Aldo/ket_reductase_CS"/>
</dbReference>
<dbReference type="InterPro" id="IPR023210">
    <property type="entry name" value="NADP_OxRdtase_dom"/>
</dbReference>
<dbReference type="InterPro" id="IPR036812">
    <property type="entry name" value="NADP_OxRdtase_dom_sf"/>
</dbReference>
<dbReference type="PANTHER" id="PTHR11732">
    <property type="entry name" value="ALDO/KETO REDUCTASE"/>
    <property type="match status" value="1"/>
</dbReference>
<dbReference type="Pfam" id="PF00248">
    <property type="entry name" value="Aldo_ket_red"/>
    <property type="match status" value="1"/>
</dbReference>
<dbReference type="PIRSF" id="PIRSF000097">
    <property type="entry name" value="AKR"/>
    <property type="match status" value="1"/>
</dbReference>
<dbReference type="PRINTS" id="PR00069">
    <property type="entry name" value="ALDKETRDTASE"/>
</dbReference>
<dbReference type="SUPFAM" id="SSF51430">
    <property type="entry name" value="NAD(P)-linked oxidoreductase"/>
    <property type="match status" value="1"/>
</dbReference>
<dbReference type="PROSITE" id="PS00798">
    <property type="entry name" value="ALDOKETO_REDUCTASE_1"/>
    <property type="match status" value="1"/>
</dbReference>
<dbReference type="PROSITE" id="PS00062">
    <property type="entry name" value="ALDOKETO_REDUCTASE_2"/>
    <property type="match status" value="1"/>
</dbReference>
<dbReference type="PROSITE" id="PS00063">
    <property type="entry name" value="ALDOKETO_REDUCTASE_3"/>
    <property type="match status" value="1"/>
</dbReference>
<evidence type="ECO:0000250" key="1"/>
<evidence type="ECO:0000250" key="2">
    <source>
        <dbReference type="UniProtKB" id="P15121"/>
    </source>
</evidence>
<evidence type="ECO:0000250" key="3">
    <source>
        <dbReference type="UniProtKB" id="P16116"/>
    </source>
</evidence>
<evidence type="ECO:0000255" key="4"/>
<evidence type="ECO:0000305" key="5"/>
<gene>
    <name type="primary">AKR1B1</name>
</gene>
<keyword id="KW-0007">Acetylation</keyword>
<keyword id="KW-0963">Cytoplasm</keyword>
<keyword id="KW-0443">Lipid metabolism</keyword>
<keyword id="KW-0521">NADP</keyword>
<keyword id="KW-0560">Oxidoreductase</keyword>
<keyword id="KW-1185">Reference proteome</keyword>
<accession>P15122</accession>
<protein>
    <recommendedName>
        <fullName>Aldo-keto reductase family 1 member B1</fullName>
        <ecNumber evidence="2">1.1.1.21</ecNumber>
        <ecNumber evidence="2">1.1.1.300</ecNumber>
        <ecNumber evidence="2">1.1.1.372</ecNumber>
        <ecNumber evidence="2">1.1.1.54</ecNumber>
    </recommendedName>
    <alternativeName>
        <fullName>Aldehyde reductase</fullName>
    </alternativeName>
    <alternativeName>
        <fullName>Aldose reductase</fullName>
        <shortName>AR</shortName>
    </alternativeName>
</protein>
<sequence length="316" mass="35763">MATHLVLYNGAKMPILGLGTWKSPPGQVTEAVKTAIDLGYRHIDCAHVYQNENEVGVALQEKLKEQVVKREELFIVSKLWCTSHDKSLVKGACQKTLNDLKLDYLDLYLIHWPTGFKHGSEYFPLDAAGNVIPSDTDFLDTWEAMEGLVDEGLVKSIGVSNFNHLQIERILNKPGLKYKPAVNQIECHPYLTQEKLIQYCHSKGIVVTAYSPLGSPDRPWAKPEDPSLLEDPRIKAIADKHKKTTAQVLIRFPMQRNLVVIPKSVTPARIAENFQVFDFELSSEDMTTLLSYNRNWRVCALVSCASHKDYPFHAEF</sequence>
<reference key="1">
    <citation type="journal article" date="1994" name="Proc. Natl. Acad. Sci. U.S.A.">
        <title>Cloning, genomic organization, and osmotic response of the aldose reductase gene.</title>
        <authorList>
            <person name="Ferraris J.D."/>
            <person name="Williams C.K."/>
            <person name="Martin B.M."/>
            <person name="Burg M.B."/>
            <person name="Garcia-Perez A."/>
        </authorList>
    </citation>
    <scope>NUCLEOTIDE SEQUENCE [GENOMIC DNA / MRNA]</scope>
    <source>
        <tissue>Spleen</tissue>
    </source>
</reference>
<reference key="2">
    <citation type="journal article" date="1989" name="J. Biol. Chem.">
        <title>Molecular cloning of cDNA coding for kidney aldose reductase. Regulation of specific mRNA accumulation by NaCl-mediated osmotic stress.</title>
        <authorList>
            <person name="Garcia-Perez A."/>
            <person name="Martin B."/>
            <person name="Murphy H.R."/>
            <person name="Uchida S."/>
            <person name="Murer H."/>
            <person name="Cowley B.D. Jr."/>
            <person name="Handler J.S."/>
            <person name="Burg M.B."/>
        </authorList>
    </citation>
    <scope>NUCLEOTIDE SEQUENCE [MRNA] OF 15-316</scope>
    <source>
        <tissue>Kidney</tissue>
    </source>
</reference>
<feature type="initiator methionine" description="Removed" evidence="3">
    <location>
        <position position="1"/>
    </location>
</feature>
<feature type="chain" id="PRO_0000124626" description="Aldo-keto reductase family 1 member B1">
    <location>
        <begin position="2"/>
        <end position="316"/>
    </location>
</feature>
<feature type="active site" description="Proton donor" evidence="2">
    <location>
        <position position="49"/>
    </location>
</feature>
<feature type="binding site" evidence="4">
    <location>
        <begin position="10"/>
        <end position="19"/>
    </location>
    <ligand>
        <name>NADP(+)</name>
        <dbReference type="ChEBI" id="CHEBI:58349"/>
    </ligand>
</feature>
<feature type="binding site" evidence="1">
    <location>
        <position position="111"/>
    </location>
    <ligand>
        <name>substrate</name>
    </ligand>
</feature>
<feature type="binding site" evidence="2">
    <location>
        <begin position="211"/>
        <end position="273"/>
    </location>
    <ligand>
        <name>NADP(+)</name>
        <dbReference type="ChEBI" id="CHEBI:58349"/>
    </ligand>
</feature>
<feature type="site" description="Lowers pKa of active site Tyr" evidence="1">
    <location>
        <position position="78"/>
    </location>
</feature>
<feature type="modified residue" description="N-acetylalanine" evidence="3">
    <location>
        <position position="2"/>
    </location>
</feature>
<feature type="modified residue" description="N6-acetyllysine" evidence="2">
    <location>
        <position position="95"/>
    </location>
</feature>
<feature type="modified residue" description="N6-acetyllysine" evidence="2">
    <location>
        <position position="222"/>
    </location>
</feature>
<feature type="modified residue" description="N6-acetyllysine" evidence="2">
    <location>
        <position position="263"/>
    </location>
</feature>